<gene>
    <name type="primary">wrt-5</name>
    <name type="ORF">W03D2.5</name>
</gene>
<proteinExistence type="evidence at transcript level"/>
<name>WRT5_CAEEL</name>
<organism>
    <name type="scientific">Caenorhabditis elegans</name>
    <dbReference type="NCBI Taxonomy" id="6239"/>
    <lineage>
        <taxon>Eukaryota</taxon>
        <taxon>Metazoa</taxon>
        <taxon>Ecdysozoa</taxon>
        <taxon>Nematoda</taxon>
        <taxon>Chromadorea</taxon>
        <taxon>Rhabditida</taxon>
        <taxon>Rhabditina</taxon>
        <taxon>Rhabditomorpha</taxon>
        <taxon>Rhabditoidea</taxon>
        <taxon>Rhabditidae</taxon>
        <taxon>Peloderinae</taxon>
        <taxon>Caenorhabditis</taxon>
    </lineage>
</organism>
<accession>Q9U7D3</accession>
<accession>O02116</accession>
<accession>Q1RS88</accession>
<keyword id="KW-0025">Alternative splicing</keyword>
<keyword id="KW-0217">Developmental protein</keyword>
<keyword id="KW-0325">Glycoprotein</keyword>
<keyword id="KW-1185">Reference proteome</keyword>
<keyword id="KW-0964">Secreted</keyword>
<keyword id="KW-0732">Signal</keyword>
<evidence type="ECO:0000255" key="1"/>
<evidence type="ECO:0000269" key="2">
    <source>
    </source>
</evidence>
<evidence type="ECO:0000269" key="3">
    <source>
    </source>
</evidence>
<evidence type="ECO:0000305" key="4"/>
<feature type="signal peptide" evidence="1">
    <location>
        <begin position="1"/>
        <end position="21"/>
    </location>
</feature>
<feature type="chain" id="PRO_0000268642" description="Warthog protein 5">
    <location>
        <begin position="22"/>
        <end position="176"/>
    </location>
</feature>
<feature type="glycosylation site" description="N-linked (GlcNAc...) asparagine" evidence="1">
    <location>
        <position position="70"/>
    </location>
</feature>
<feature type="splice variant" id="VSP_021976" description="In isoform b." evidence="4">
    <location>
        <begin position="1"/>
        <end position="87"/>
    </location>
</feature>
<feature type="splice variant" id="VSP_021977" description="In isoform b." evidence="4">
    <original>K</original>
    <variation>KVGIFGGKFEKIGGIFHENPNFQ</variation>
    <location>
        <position position="105"/>
    </location>
</feature>
<feature type="sequence conflict" description="In Ref. 1; AAD33830." evidence="4" ref="1">
    <original>E</original>
    <variation>K</variation>
    <location>
        <position position="118"/>
    </location>
</feature>
<protein>
    <recommendedName>
        <fullName>Warthog protein 5</fullName>
    </recommendedName>
</protein>
<dbReference type="EMBL" id="AF139520">
    <property type="protein sequence ID" value="AAD33830.1"/>
    <property type="molecule type" value="mRNA"/>
</dbReference>
<dbReference type="EMBL" id="FO080786">
    <property type="protein sequence ID" value="CCD66761.1"/>
    <property type="molecule type" value="Genomic_DNA"/>
</dbReference>
<dbReference type="EMBL" id="FO080786">
    <property type="protein sequence ID" value="CCD66762.1"/>
    <property type="molecule type" value="Genomic_DNA"/>
</dbReference>
<dbReference type="PIR" id="T28762">
    <property type="entry name" value="T28762"/>
</dbReference>
<dbReference type="RefSeq" id="NP_001040994.1">
    <molecule id="Q9U7D3-1"/>
    <property type="nucleotide sequence ID" value="NM_001047529.4"/>
</dbReference>
<dbReference type="RefSeq" id="NP_001040995.1">
    <molecule id="Q9U7D3-2"/>
    <property type="nucleotide sequence ID" value="NM_001047530.4"/>
</dbReference>
<dbReference type="BioGRID" id="42298">
    <property type="interactions" value="1"/>
</dbReference>
<dbReference type="DIP" id="DIP-24286N"/>
<dbReference type="FunCoup" id="Q9U7D3">
    <property type="interactions" value="34"/>
</dbReference>
<dbReference type="IntAct" id="Q9U7D3">
    <property type="interactions" value="1"/>
</dbReference>
<dbReference type="STRING" id="6239.W03D2.5a.1"/>
<dbReference type="GlyCosmos" id="Q9U7D3">
    <property type="glycosylation" value="1 site, No reported glycans"/>
</dbReference>
<dbReference type="PaxDb" id="6239-W03D2.5a"/>
<dbReference type="PeptideAtlas" id="Q9U7D3"/>
<dbReference type="EnsemblMetazoa" id="W03D2.5a.1">
    <molecule id="Q9U7D3-1"/>
    <property type="protein sequence ID" value="W03D2.5a.1"/>
    <property type="gene ID" value="WBGene00006951"/>
</dbReference>
<dbReference type="EnsemblMetazoa" id="W03D2.5b.1">
    <molecule id="Q9U7D3-2"/>
    <property type="protein sequence ID" value="W03D2.5b.1"/>
    <property type="gene ID" value="WBGene00006951"/>
</dbReference>
<dbReference type="GeneID" id="177162"/>
<dbReference type="KEGG" id="cel:CELE_W03D2.5"/>
<dbReference type="UCSC" id="W03D2.5b">
    <molecule id="Q9U7D3-1"/>
    <property type="organism name" value="c. elegans"/>
</dbReference>
<dbReference type="AGR" id="WB:WBGene00006951"/>
<dbReference type="CTD" id="177162"/>
<dbReference type="WormBase" id="W03D2.5a">
    <molecule id="Q9U7D3-1"/>
    <property type="protein sequence ID" value="CE14514"/>
    <property type="gene ID" value="WBGene00006951"/>
    <property type="gene designation" value="wrt-5"/>
</dbReference>
<dbReference type="WormBase" id="W03D2.5b">
    <molecule id="Q9U7D3-2"/>
    <property type="protein sequence ID" value="CE33717"/>
    <property type="gene ID" value="WBGene00006951"/>
    <property type="gene designation" value="wrt-5"/>
</dbReference>
<dbReference type="eggNOG" id="KOG3638">
    <property type="taxonomic scope" value="Eukaryota"/>
</dbReference>
<dbReference type="HOGENOM" id="CLU_130582_0_0_1"/>
<dbReference type="InParanoid" id="Q9U7D3"/>
<dbReference type="OMA" id="PLYVQCC"/>
<dbReference type="OrthoDB" id="5802408at2759"/>
<dbReference type="PhylomeDB" id="Q9U7D3"/>
<dbReference type="PRO" id="PR:Q9U7D3"/>
<dbReference type="Proteomes" id="UP000001940">
    <property type="component" value="Chromosome IV"/>
</dbReference>
<dbReference type="Bgee" id="WBGene00006951">
    <property type="expression patterns" value="Expressed in pharyngeal muscle cell (C elegans) and 3 other cell types or tissues"/>
</dbReference>
<dbReference type="ExpressionAtlas" id="Q9U7D3">
    <property type="expression patterns" value="baseline and differential"/>
</dbReference>
<dbReference type="GO" id="GO:0005576">
    <property type="term" value="C:extracellular region"/>
    <property type="evidence" value="ECO:0000250"/>
    <property type="project" value="WormBase"/>
</dbReference>
<dbReference type="GO" id="GO:0005102">
    <property type="term" value="F:signaling receptor binding"/>
    <property type="evidence" value="ECO:0000250"/>
    <property type="project" value="WormBase"/>
</dbReference>
<dbReference type="GO" id="GO:0007154">
    <property type="term" value="P:cell communication"/>
    <property type="evidence" value="ECO:0000250"/>
    <property type="project" value="WormBase"/>
</dbReference>
<dbReference type="InterPro" id="IPR052140">
    <property type="entry name" value="Dev_Signal_Hedgehog-like"/>
</dbReference>
<dbReference type="PANTHER" id="PTHR46706">
    <property type="entry name" value="PROTEIN QUA-1-RELATED"/>
    <property type="match status" value="1"/>
</dbReference>
<dbReference type="PANTHER" id="PTHR46706:SF12">
    <property type="entry name" value="PROTEIN QUA-1-RELATED"/>
    <property type="match status" value="1"/>
</dbReference>
<reference key="1">
    <citation type="journal article" date="1999" name="Genome Res.">
        <title>Caenorhabditis elegans has scores of hedgehog-related genes: sequence and expression analysis.</title>
        <authorList>
            <person name="Aspoeck G."/>
            <person name="Kagoshima H."/>
            <person name="Niklaus G."/>
            <person name="Buerglin T.R."/>
        </authorList>
    </citation>
    <scope>NUCLEOTIDE SEQUENCE [MRNA] (ISOFORM A)</scope>
    <scope>NOMENCLATURE</scope>
    <scope>TISSUE SPECIFICITY</scope>
    <scope>DEVELOPMENTAL STAGE</scope>
</reference>
<reference key="2">
    <citation type="journal article" date="1998" name="Science">
        <title>Genome sequence of the nematode C. elegans: a platform for investigating biology.</title>
        <authorList>
            <consortium name="The C. elegans sequencing consortium"/>
        </authorList>
    </citation>
    <scope>NUCLEOTIDE SEQUENCE [LARGE SCALE GENOMIC DNA]</scope>
    <scope>ALTERNATIVE SPLICING</scope>
    <source>
        <strain>Bristol N2</strain>
    </source>
</reference>
<reference key="3">
    <citation type="journal article" date="2006" name="Dev. Biol.">
        <title>The hedgehog-related gene wrt-5 is essential for hypodermal development in Caenorhabditis elegans.</title>
        <authorList>
            <person name="Hao L."/>
            <person name="Aspoeck G."/>
            <person name="Buerglin T.R."/>
        </authorList>
    </citation>
    <scope>FUNCTION</scope>
    <scope>TISSUE SPECIFICITY</scope>
    <scope>DEVELOPMENTAL STAGE</scope>
    <scope>SUBCELLULAR LOCATION</scope>
    <scope>DISRUPTION PHENOTYPE</scope>
</reference>
<comment type="function">
    <text evidence="3">Intercellular signal essential for a variety of patterning events during development.</text>
</comment>
<comment type="subcellular location">
    <subcellularLocation>
        <location evidence="3">Secreted</location>
    </subcellularLocation>
</comment>
<comment type="alternative products">
    <event type="alternative splicing"/>
    <isoform>
        <id>Q9U7D3-1</id>
        <name>a</name>
        <sequence type="displayed"/>
    </isoform>
    <isoform>
        <id>Q9U7D3-2</id>
        <name>b</name>
        <sequence type="described" ref="VSP_021976 VSP_021977"/>
    </isoform>
</comment>
<comment type="tissue specificity">
    <text evidence="2 3">Expressed in seam cells, excretory cell, reproductive system, pharynx, pharyngeal-intestinal valve cells, neurons and neuronal support cells.</text>
</comment>
<comment type="developmental stage">
    <text evidence="2 3">Expressed in the seam cells of 1.2-fold embryos.</text>
</comment>
<comment type="disruption phenotype">
    <text evidence="3">Worms either die at embryonic or larval stages (43%), or exhibit variable abnormal morphology.</text>
</comment>
<sequence>MCSMWLMASWLMAFVAGSTLADYCGDHKVPFGMEVHKNGNVNILCSRPSCHEKKYAECPERATSTTCSTNSSWVGGVTQHSDGSLRLMCCEYDLLPTYSTIQYEKLTIRTGEYFEGDEQMEGDVVTAFDLIGNIEQVKEPDGKYSYNLLIYRYHCGNIPDTPPAWYMKKQWPYWEK</sequence>